<proteinExistence type="inferred from homology"/>
<organism>
    <name type="scientific">Escherichia coli (strain SE11)</name>
    <dbReference type="NCBI Taxonomy" id="409438"/>
    <lineage>
        <taxon>Bacteria</taxon>
        <taxon>Pseudomonadati</taxon>
        <taxon>Pseudomonadota</taxon>
        <taxon>Gammaproteobacteria</taxon>
        <taxon>Enterobacterales</taxon>
        <taxon>Enterobacteriaceae</taxon>
        <taxon>Escherichia</taxon>
    </lineage>
</organism>
<feature type="signal peptide" evidence="1">
    <location>
        <begin position="1"/>
        <end position="20"/>
    </location>
</feature>
<feature type="chain" id="PRO_1000132361" description="Ecotin">
    <location>
        <begin position="21"/>
        <end position="162"/>
    </location>
</feature>
<feature type="site" description="Reactive bond" evidence="1">
    <location>
        <begin position="104"/>
        <end position="105"/>
    </location>
</feature>
<feature type="disulfide bond" evidence="1">
    <location>
        <begin position="70"/>
        <end position="107"/>
    </location>
</feature>
<dbReference type="EMBL" id="AP009240">
    <property type="protein sequence ID" value="BAG78001.1"/>
    <property type="molecule type" value="Genomic_DNA"/>
</dbReference>
<dbReference type="SMR" id="B6I1A7"/>
<dbReference type="MEROPS" id="I11.001"/>
<dbReference type="KEGG" id="ecy:ECSE_2477"/>
<dbReference type="HOGENOM" id="CLU_111565_0_0_6"/>
<dbReference type="Proteomes" id="UP000008199">
    <property type="component" value="Chromosome"/>
</dbReference>
<dbReference type="GO" id="GO:0042597">
    <property type="term" value="C:periplasmic space"/>
    <property type="evidence" value="ECO:0007669"/>
    <property type="project" value="UniProtKB-SubCell"/>
</dbReference>
<dbReference type="GO" id="GO:0004867">
    <property type="term" value="F:serine-type endopeptidase inhibitor activity"/>
    <property type="evidence" value="ECO:0007669"/>
    <property type="project" value="UniProtKB-UniRule"/>
</dbReference>
<dbReference type="CDD" id="cd00242">
    <property type="entry name" value="Ecotin"/>
    <property type="match status" value="1"/>
</dbReference>
<dbReference type="FunFam" id="2.60.40.550:FF:000001">
    <property type="entry name" value="Ecotin"/>
    <property type="match status" value="1"/>
</dbReference>
<dbReference type="FunFam" id="4.10.1230.10:FF:000001">
    <property type="entry name" value="Ecotin"/>
    <property type="match status" value="1"/>
</dbReference>
<dbReference type="Gene3D" id="2.60.40.550">
    <property type="entry name" value="Ecotin"/>
    <property type="match status" value="1"/>
</dbReference>
<dbReference type="Gene3D" id="4.10.1230.10">
    <property type="entry name" value="Ecotin, trypsin inhibitor"/>
    <property type="match status" value="1"/>
</dbReference>
<dbReference type="HAMAP" id="MF_00706">
    <property type="entry name" value="Ecotin"/>
    <property type="match status" value="1"/>
</dbReference>
<dbReference type="InterPro" id="IPR027438">
    <property type="entry name" value="Ecotin_C"/>
</dbReference>
<dbReference type="InterPro" id="IPR036198">
    <property type="entry name" value="Ecotin_sf"/>
</dbReference>
<dbReference type="InterPro" id="IPR005658">
    <property type="entry name" value="Prot_inh_ecotin"/>
</dbReference>
<dbReference type="InterPro" id="IPR023084">
    <property type="entry name" value="Prot_inh_ecotin_gammaproteobac"/>
</dbReference>
<dbReference type="NCBIfam" id="NF002987">
    <property type="entry name" value="PRK03719.1"/>
    <property type="match status" value="1"/>
</dbReference>
<dbReference type="PANTHER" id="PTHR35890">
    <property type="match status" value="1"/>
</dbReference>
<dbReference type="PANTHER" id="PTHR35890:SF3">
    <property type="entry name" value="ECOTIN"/>
    <property type="match status" value="1"/>
</dbReference>
<dbReference type="Pfam" id="PF03974">
    <property type="entry name" value="Ecotin"/>
    <property type="match status" value="1"/>
</dbReference>
<dbReference type="PIRSF" id="PIRSF006865">
    <property type="entry name" value="Prot_inh_ecotin"/>
    <property type="match status" value="1"/>
</dbReference>
<dbReference type="SUPFAM" id="SSF49772">
    <property type="entry name" value="Ecotin, trypsin inhibitor"/>
    <property type="match status" value="1"/>
</dbReference>
<sequence>MKTILPAVLFAAFATTSAWAAESVQPLEKIAPYPQAEKGMKRQVIQLTPQEDESTLKVELLIGQTLEVDCNLHRLGGKLESKTLEGWGYDYYVFDKVSSPVSTMMACPDGKKEKKFVTAYLGDAGMLRYNSKLPIVVYTPDNVDVKYRVWKAEEKIDNAVVR</sequence>
<keyword id="KW-1015">Disulfide bond</keyword>
<keyword id="KW-0574">Periplasm</keyword>
<keyword id="KW-0646">Protease inhibitor</keyword>
<keyword id="KW-0722">Serine protease inhibitor</keyword>
<keyword id="KW-0732">Signal</keyword>
<gene>
    <name evidence="1" type="primary">eco</name>
    <name type="ordered locus">ECSE_2477</name>
</gene>
<reference key="1">
    <citation type="journal article" date="2008" name="DNA Res.">
        <title>Complete genome sequence and comparative analysis of the wild-type commensal Escherichia coli strain SE11 isolated from a healthy adult.</title>
        <authorList>
            <person name="Oshima K."/>
            <person name="Toh H."/>
            <person name="Ogura Y."/>
            <person name="Sasamoto H."/>
            <person name="Morita H."/>
            <person name="Park S.-H."/>
            <person name="Ooka T."/>
            <person name="Iyoda S."/>
            <person name="Taylor T.D."/>
            <person name="Hayashi T."/>
            <person name="Itoh K."/>
            <person name="Hattori M."/>
        </authorList>
    </citation>
    <scope>NUCLEOTIDE SEQUENCE [LARGE SCALE GENOMIC DNA]</scope>
    <source>
        <strain>SE11</strain>
    </source>
</reference>
<comment type="function">
    <text evidence="1">General inhibitor of pancreatic serine proteases: inhibits chymotrypsin, trypsin, elastases, factor X, kallikrein as well as a variety of other proteases.</text>
</comment>
<comment type="subunit">
    <text evidence="1">Homodimer.</text>
</comment>
<comment type="subcellular location">
    <subcellularLocation>
        <location evidence="1">Periplasm</location>
    </subcellularLocation>
</comment>
<comment type="similarity">
    <text evidence="1">Belongs to the protease inhibitor I11 (ecotin) family.</text>
</comment>
<accession>B6I1A7</accession>
<protein>
    <recommendedName>
        <fullName evidence="1">Ecotin</fullName>
    </recommendedName>
</protein>
<evidence type="ECO:0000255" key="1">
    <source>
        <dbReference type="HAMAP-Rule" id="MF_00706"/>
    </source>
</evidence>
<name>ECOT_ECOSE</name>